<accession>Q87AJ1</accession>
<proteinExistence type="inferred from homology"/>
<evidence type="ECO:0000255" key="1">
    <source>
        <dbReference type="HAMAP-Rule" id="MF_00536"/>
    </source>
</evidence>
<dbReference type="EC" id="1.1.1.262" evidence="1"/>
<dbReference type="EMBL" id="AE009442">
    <property type="protein sequence ID" value="AAO29666.1"/>
    <property type="molecule type" value="Genomic_DNA"/>
</dbReference>
<dbReference type="RefSeq" id="WP_004084423.1">
    <property type="nucleotide sequence ID" value="NC_004556.1"/>
</dbReference>
<dbReference type="SMR" id="Q87AJ1"/>
<dbReference type="GeneID" id="93905688"/>
<dbReference type="KEGG" id="xft:PD_1834"/>
<dbReference type="HOGENOM" id="CLU_040168_1_0_6"/>
<dbReference type="UniPathway" id="UPA00244">
    <property type="reaction ID" value="UER00312"/>
</dbReference>
<dbReference type="Proteomes" id="UP000002516">
    <property type="component" value="Chromosome"/>
</dbReference>
<dbReference type="GO" id="GO:0005737">
    <property type="term" value="C:cytoplasm"/>
    <property type="evidence" value="ECO:0007669"/>
    <property type="project" value="UniProtKB-SubCell"/>
</dbReference>
<dbReference type="GO" id="GO:0050570">
    <property type="term" value="F:4-hydroxythreonine-4-phosphate dehydrogenase activity"/>
    <property type="evidence" value="ECO:0007669"/>
    <property type="project" value="UniProtKB-UniRule"/>
</dbReference>
<dbReference type="GO" id="GO:0050897">
    <property type="term" value="F:cobalt ion binding"/>
    <property type="evidence" value="ECO:0007669"/>
    <property type="project" value="UniProtKB-UniRule"/>
</dbReference>
<dbReference type="GO" id="GO:0000287">
    <property type="term" value="F:magnesium ion binding"/>
    <property type="evidence" value="ECO:0007669"/>
    <property type="project" value="UniProtKB-UniRule"/>
</dbReference>
<dbReference type="GO" id="GO:0051287">
    <property type="term" value="F:NAD binding"/>
    <property type="evidence" value="ECO:0007669"/>
    <property type="project" value="InterPro"/>
</dbReference>
<dbReference type="GO" id="GO:0008270">
    <property type="term" value="F:zinc ion binding"/>
    <property type="evidence" value="ECO:0007669"/>
    <property type="project" value="UniProtKB-UniRule"/>
</dbReference>
<dbReference type="GO" id="GO:0042823">
    <property type="term" value="P:pyridoxal phosphate biosynthetic process"/>
    <property type="evidence" value="ECO:0007669"/>
    <property type="project" value="UniProtKB-UniRule"/>
</dbReference>
<dbReference type="GO" id="GO:0008615">
    <property type="term" value="P:pyridoxine biosynthetic process"/>
    <property type="evidence" value="ECO:0007669"/>
    <property type="project" value="UniProtKB-UniRule"/>
</dbReference>
<dbReference type="Gene3D" id="3.40.718.10">
    <property type="entry name" value="Isopropylmalate Dehydrogenase"/>
    <property type="match status" value="1"/>
</dbReference>
<dbReference type="HAMAP" id="MF_00536">
    <property type="entry name" value="PdxA"/>
    <property type="match status" value="1"/>
</dbReference>
<dbReference type="InterPro" id="IPR037510">
    <property type="entry name" value="PdxA"/>
</dbReference>
<dbReference type="InterPro" id="IPR005255">
    <property type="entry name" value="PdxA_fam"/>
</dbReference>
<dbReference type="NCBIfam" id="TIGR00557">
    <property type="entry name" value="pdxA"/>
    <property type="match status" value="1"/>
</dbReference>
<dbReference type="PANTHER" id="PTHR30004">
    <property type="entry name" value="4-HYDROXYTHREONINE-4-PHOSPHATE DEHYDROGENASE"/>
    <property type="match status" value="1"/>
</dbReference>
<dbReference type="PANTHER" id="PTHR30004:SF5">
    <property type="entry name" value="4-HYDROXYTHREONINE-4-PHOSPHATE DEHYDROGENASE"/>
    <property type="match status" value="1"/>
</dbReference>
<dbReference type="Pfam" id="PF04166">
    <property type="entry name" value="PdxA"/>
    <property type="match status" value="1"/>
</dbReference>
<dbReference type="SUPFAM" id="SSF53659">
    <property type="entry name" value="Isocitrate/Isopropylmalate dehydrogenase-like"/>
    <property type="match status" value="1"/>
</dbReference>
<organism>
    <name type="scientific">Xylella fastidiosa (strain Temecula1 / ATCC 700964)</name>
    <dbReference type="NCBI Taxonomy" id="183190"/>
    <lineage>
        <taxon>Bacteria</taxon>
        <taxon>Pseudomonadati</taxon>
        <taxon>Pseudomonadota</taxon>
        <taxon>Gammaproteobacteria</taxon>
        <taxon>Lysobacterales</taxon>
        <taxon>Lysobacteraceae</taxon>
        <taxon>Xylella</taxon>
    </lineage>
</organism>
<reference key="1">
    <citation type="journal article" date="2003" name="J. Bacteriol.">
        <title>Comparative analyses of the complete genome sequences of Pierce's disease and citrus variegated chlorosis strains of Xylella fastidiosa.</title>
        <authorList>
            <person name="Van Sluys M.A."/>
            <person name="de Oliveira M.C."/>
            <person name="Monteiro-Vitorello C.B."/>
            <person name="Miyaki C.Y."/>
            <person name="Furlan L.R."/>
            <person name="Camargo L.E.A."/>
            <person name="da Silva A.C.R."/>
            <person name="Moon D.H."/>
            <person name="Takita M.A."/>
            <person name="Lemos E.G.M."/>
            <person name="Machado M.A."/>
            <person name="Ferro M.I.T."/>
            <person name="da Silva F.R."/>
            <person name="Goldman M.H.S."/>
            <person name="Goldman G.H."/>
            <person name="Lemos M.V.F."/>
            <person name="El-Dorry H."/>
            <person name="Tsai S.M."/>
            <person name="Carrer H."/>
            <person name="Carraro D.M."/>
            <person name="de Oliveira R.C."/>
            <person name="Nunes L.R."/>
            <person name="Siqueira W.J."/>
            <person name="Coutinho L.L."/>
            <person name="Kimura E.T."/>
            <person name="Ferro E.S."/>
            <person name="Harakava R."/>
            <person name="Kuramae E.E."/>
            <person name="Marino C.L."/>
            <person name="Giglioti E."/>
            <person name="Abreu I.L."/>
            <person name="Alves L.M.C."/>
            <person name="do Amaral A.M."/>
            <person name="Baia G.S."/>
            <person name="Blanco S.R."/>
            <person name="Brito M.S."/>
            <person name="Cannavan F.S."/>
            <person name="Celestino A.V."/>
            <person name="da Cunha A.F."/>
            <person name="Fenille R.C."/>
            <person name="Ferro J.A."/>
            <person name="Formighieri E.F."/>
            <person name="Kishi L.T."/>
            <person name="Leoni S.G."/>
            <person name="Oliveira A.R."/>
            <person name="Rosa V.E. Jr."/>
            <person name="Sassaki F.T."/>
            <person name="Sena J.A.D."/>
            <person name="de Souza A.A."/>
            <person name="Truffi D."/>
            <person name="Tsukumo F."/>
            <person name="Yanai G.M."/>
            <person name="Zaros L.G."/>
            <person name="Civerolo E.L."/>
            <person name="Simpson A.J.G."/>
            <person name="Almeida N.F. Jr."/>
            <person name="Setubal J.C."/>
            <person name="Kitajima J.P."/>
        </authorList>
    </citation>
    <scope>NUCLEOTIDE SEQUENCE [LARGE SCALE GENOMIC DNA]</scope>
    <source>
        <strain>Temecula1 / ATCC 700964</strain>
    </source>
</reference>
<feature type="chain" id="PRO_0000188840" description="4-hydroxythreonine-4-phosphate dehydrogenase">
    <location>
        <begin position="1"/>
        <end position="330"/>
    </location>
</feature>
<feature type="binding site" evidence="1">
    <location>
        <position position="133"/>
    </location>
    <ligand>
        <name>substrate</name>
    </ligand>
</feature>
<feature type="binding site" evidence="1">
    <location>
        <position position="161"/>
    </location>
    <ligand>
        <name>a divalent metal cation</name>
        <dbReference type="ChEBI" id="CHEBI:60240"/>
        <note>ligand shared between dimeric partners</note>
    </ligand>
</feature>
<feature type="binding site" evidence="1">
    <location>
        <position position="206"/>
    </location>
    <ligand>
        <name>a divalent metal cation</name>
        <dbReference type="ChEBI" id="CHEBI:60240"/>
        <note>ligand shared between dimeric partners</note>
    </ligand>
</feature>
<feature type="binding site" evidence="1">
    <location>
        <position position="261"/>
    </location>
    <ligand>
        <name>a divalent metal cation</name>
        <dbReference type="ChEBI" id="CHEBI:60240"/>
        <note>ligand shared between dimeric partners</note>
    </ligand>
</feature>
<feature type="binding site" evidence="1">
    <location>
        <position position="269"/>
    </location>
    <ligand>
        <name>substrate</name>
    </ligand>
</feature>
<feature type="binding site" evidence="1">
    <location>
        <position position="278"/>
    </location>
    <ligand>
        <name>substrate</name>
    </ligand>
</feature>
<feature type="binding site" evidence="1">
    <location>
        <position position="287"/>
    </location>
    <ligand>
        <name>substrate</name>
    </ligand>
</feature>
<comment type="function">
    <text evidence="1">Catalyzes the NAD(P)-dependent oxidation of 4-(phosphooxy)-L-threonine (HTP) into 2-amino-3-oxo-4-(phosphooxy)butyric acid which spontaneously decarboxylates to form 3-amino-2-oxopropyl phosphate (AHAP).</text>
</comment>
<comment type="catalytic activity">
    <reaction evidence="1">
        <text>4-(phosphooxy)-L-threonine + NAD(+) = 3-amino-2-oxopropyl phosphate + CO2 + NADH</text>
        <dbReference type="Rhea" id="RHEA:32275"/>
        <dbReference type="ChEBI" id="CHEBI:16526"/>
        <dbReference type="ChEBI" id="CHEBI:57279"/>
        <dbReference type="ChEBI" id="CHEBI:57540"/>
        <dbReference type="ChEBI" id="CHEBI:57945"/>
        <dbReference type="ChEBI" id="CHEBI:58452"/>
        <dbReference type="EC" id="1.1.1.262"/>
    </reaction>
</comment>
<comment type="cofactor">
    <cofactor evidence="1">
        <name>Zn(2+)</name>
        <dbReference type="ChEBI" id="CHEBI:29105"/>
    </cofactor>
    <cofactor evidence="1">
        <name>Mg(2+)</name>
        <dbReference type="ChEBI" id="CHEBI:18420"/>
    </cofactor>
    <cofactor evidence="1">
        <name>Co(2+)</name>
        <dbReference type="ChEBI" id="CHEBI:48828"/>
    </cofactor>
    <text evidence="1">Binds 1 divalent metal cation per subunit. Can use ions such as Zn(2+), Mg(2+) or Co(2+).</text>
</comment>
<comment type="pathway">
    <text evidence="1">Cofactor biosynthesis; pyridoxine 5'-phosphate biosynthesis; pyridoxine 5'-phosphate from D-erythrose 4-phosphate: step 4/5.</text>
</comment>
<comment type="subunit">
    <text evidence="1">Homodimer.</text>
</comment>
<comment type="subcellular location">
    <subcellularLocation>
        <location evidence="1">Cytoplasm</location>
    </subcellularLocation>
</comment>
<comment type="miscellaneous">
    <text evidence="1">The active site is located at the dimer interface.</text>
</comment>
<comment type="similarity">
    <text evidence="1">Belongs to the PdxA family.</text>
</comment>
<sequence length="330" mass="34654">MLHPALALVPGEPAGVGPELCVRLVQQPRQDCRLVAFADPATLQAAAAALDLPLRLLPPEALPERPGDLPIQAHCHVHPTRFGHPDPANAPAVIAALCEAASHCVHGVLHGIVTGPVHKAVINQSGIHYTGTTELLAAQAECDVVMMLANPHLRVALVTTHLPLRDVPDAITAALLERCLRIVNTAMCGDFGIATPRIAVLGLNPHAGEEGYLGREELDVVIPVLQRLRAEGMVLLGPLSADTAFLPTKLIGYDAVVAMYHDQGLPVLKHSGFEQAVNITLGLPYPRVAVDHGTALDLAGRGVADPSSLFAATALCARLAASRALLSVRS</sequence>
<gene>
    <name evidence="1" type="primary">pdxA</name>
    <name type="ordered locus">PD_1834</name>
</gene>
<protein>
    <recommendedName>
        <fullName evidence="1">4-hydroxythreonine-4-phosphate dehydrogenase</fullName>
        <ecNumber evidence="1">1.1.1.262</ecNumber>
    </recommendedName>
    <alternativeName>
        <fullName evidence="1">4-(phosphohydroxy)-L-threonine dehydrogenase</fullName>
    </alternativeName>
</protein>
<name>PDXA_XYLFT</name>
<keyword id="KW-0170">Cobalt</keyword>
<keyword id="KW-0963">Cytoplasm</keyword>
<keyword id="KW-0460">Magnesium</keyword>
<keyword id="KW-0479">Metal-binding</keyword>
<keyword id="KW-0520">NAD</keyword>
<keyword id="KW-0521">NADP</keyword>
<keyword id="KW-0560">Oxidoreductase</keyword>
<keyword id="KW-0664">Pyridoxine biosynthesis</keyword>
<keyword id="KW-1185">Reference proteome</keyword>
<keyword id="KW-0862">Zinc</keyword>